<reference key="1">
    <citation type="submission" date="2008-03" db="EMBL/GenBank/DDBJ databases">
        <title>Complete sequence of chromosome of Methylobacterium radiotolerans JCM 2831.</title>
        <authorList>
            <consortium name="US DOE Joint Genome Institute"/>
            <person name="Copeland A."/>
            <person name="Lucas S."/>
            <person name="Lapidus A."/>
            <person name="Glavina del Rio T."/>
            <person name="Dalin E."/>
            <person name="Tice H."/>
            <person name="Bruce D."/>
            <person name="Goodwin L."/>
            <person name="Pitluck S."/>
            <person name="Kiss H."/>
            <person name="Brettin T."/>
            <person name="Detter J.C."/>
            <person name="Han C."/>
            <person name="Kuske C.R."/>
            <person name="Schmutz J."/>
            <person name="Larimer F."/>
            <person name="Land M."/>
            <person name="Hauser L."/>
            <person name="Kyrpides N."/>
            <person name="Mikhailova N."/>
            <person name="Marx C.J."/>
            <person name="Richardson P."/>
        </authorList>
    </citation>
    <scope>NUCLEOTIDE SEQUENCE [LARGE SCALE GENOMIC DNA]</scope>
    <source>
        <strain>ATCC 27329 / DSM 1819 / JCM 2831 / NBRC 15690 / NCIMB 10815 / 0-1</strain>
    </source>
</reference>
<protein>
    <recommendedName>
        <fullName evidence="1">Small ribosomal subunit protein uS2</fullName>
    </recommendedName>
    <alternativeName>
        <fullName evidence="2">30S ribosomal protein S2</fullName>
    </alternativeName>
</protein>
<gene>
    <name evidence="1" type="primary">rpsB</name>
    <name type="ordered locus">Mrad2831_3450</name>
</gene>
<feature type="chain" id="PRO_0000352007" description="Small ribosomal subunit protein uS2">
    <location>
        <begin position="1"/>
        <end position="355"/>
    </location>
</feature>
<organism>
    <name type="scientific">Methylobacterium radiotolerans (strain ATCC 27329 / DSM 1819 / JCM 2831 / NBRC 15690 / NCIMB 10815 / 0-1)</name>
    <dbReference type="NCBI Taxonomy" id="426355"/>
    <lineage>
        <taxon>Bacteria</taxon>
        <taxon>Pseudomonadati</taxon>
        <taxon>Pseudomonadota</taxon>
        <taxon>Alphaproteobacteria</taxon>
        <taxon>Hyphomicrobiales</taxon>
        <taxon>Methylobacteriaceae</taxon>
        <taxon>Methylobacterium</taxon>
    </lineage>
</organism>
<accession>B1LTQ8</accession>
<keyword id="KW-0687">Ribonucleoprotein</keyword>
<keyword id="KW-0689">Ribosomal protein</keyword>
<comment type="similarity">
    <text evidence="1">Belongs to the universal ribosomal protein uS2 family.</text>
</comment>
<evidence type="ECO:0000255" key="1">
    <source>
        <dbReference type="HAMAP-Rule" id="MF_00291"/>
    </source>
</evidence>
<evidence type="ECO:0000305" key="2"/>
<proteinExistence type="inferred from homology"/>
<dbReference type="EMBL" id="CP001001">
    <property type="protein sequence ID" value="ACB25427.1"/>
    <property type="molecule type" value="Genomic_DNA"/>
</dbReference>
<dbReference type="RefSeq" id="WP_012320390.1">
    <property type="nucleotide sequence ID" value="NC_010505.1"/>
</dbReference>
<dbReference type="SMR" id="B1LTQ8"/>
<dbReference type="STRING" id="426355.Mrad2831_3450"/>
<dbReference type="KEGG" id="mrd:Mrad2831_3450"/>
<dbReference type="eggNOG" id="COG0052">
    <property type="taxonomic scope" value="Bacteria"/>
</dbReference>
<dbReference type="HOGENOM" id="CLU_040318_2_1_5"/>
<dbReference type="OrthoDB" id="9808036at2"/>
<dbReference type="Proteomes" id="UP000006589">
    <property type="component" value="Chromosome"/>
</dbReference>
<dbReference type="GO" id="GO:0022627">
    <property type="term" value="C:cytosolic small ribosomal subunit"/>
    <property type="evidence" value="ECO:0007669"/>
    <property type="project" value="TreeGrafter"/>
</dbReference>
<dbReference type="GO" id="GO:0003735">
    <property type="term" value="F:structural constituent of ribosome"/>
    <property type="evidence" value="ECO:0007669"/>
    <property type="project" value="InterPro"/>
</dbReference>
<dbReference type="GO" id="GO:0006412">
    <property type="term" value="P:translation"/>
    <property type="evidence" value="ECO:0007669"/>
    <property type="project" value="UniProtKB-UniRule"/>
</dbReference>
<dbReference type="CDD" id="cd01425">
    <property type="entry name" value="RPS2"/>
    <property type="match status" value="1"/>
</dbReference>
<dbReference type="Gene3D" id="1.10.150.20">
    <property type="entry name" value="5' to 3' exonuclease, C-terminal subdomain"/>
    <property type="match status" value="1"/>
</dbReference>
<dbReference type="Gene3D" id="3.40.50.10490">
    <property type="entry name" value="Glucose-6-phosphate isomerase like protein, domain 1"/>
    <property type="match status" value="1"/>
</dbReference>
<dbReference type="Gene3D" id="1.10.287.610">
    <property type="entry name" value="Helix hairpin bin"/>
    <property type="match status" value="1"/>
</dbReference>
<dbReference type="HAMAP" id="MF_00291_B">
    <property type="entry name" value="Ribosomal_uS2_B"/>
    <property type="match status" value="1"/>
</dbReference>
<dbReference type="InterPro" id="IPR001865">
    <property type="entry name" value="Ribosomal_uS2"/>
</dbReference>
<dbReference type="InterPro" id="IPR005706">
    <property type="entry name" value="Ribosomal_uS2_bac/mit/plastid"/>
</dbReference>
<dbReference type="InterPro" id="IPR018130">
    <property type="entry name" value="Ribosomal_uS2_CS"/>
</dbReference>
<dbReference type="InterPro" id="IPR023591">
    <property type="entry name" value="Ribosomal_uS2_flav_dom_sf"/>
</dbReference>
<dbReference type="NCBIfam" id="NF008966">
    <property type="entry name" value="PRK12311.1"/>
    <property type="match status" value="1"/>
</dbReference>
<dbReference type="NCBIfam" id="TIGR01011">
    <property type="entry name" value="rpsB_bact"/>
    <property type="match status" value="1"/>
</dbReference>
<dbReference type="PANTHER" id="PTHR12534">
    <property type="entry name" value="30S RIBOSOMAL PROTEIN S2 PROKARYOTIC AND ORGANELLAR"/>
    <property type="match status" value="1"/>
</dbReference>
<dbReference type="PANTHER" id="PTHR12534:SF0">
    <property type="entry name" value="SMALL RIBOSOMAL SUBUNIT PROTEIN US2M"/>
    <property type="match status" value="1"/>
</dbReference>
<dbReference type="Pfam" id="PF00318">
    <property type="entry name" value="Ribosomal_S2"/>
    <property type="match status" value="1"/>
</dbReference>
<dbReference type="PRINTS" id="PR00395">
    <property type="entry name" value="RIBOSOMALS2"/>
</dbReference>
<dbReference type="SUPFAM" id="SSF52313">
    <property type="entry name" value="Ribosomal protein S2"/>
    <property type="match status" value="1"/>
</dbReference>
<dbReference type="PROSITE" id="PS00962">
    <property type="entry name" value="RIBOSOMAL_S2_1"/>
    <property type="match status" value="1"/>
</dbReference>
<dbReference type="PROSITE" id="PS00963">
    <property type="entry name" value="RIBOSOMAL_S2_2"/>
    <property type="match status" value="1"/>
</dbReference>
<name>RS2_METRJ</name>
<sequence>MAVDFSMRQLLEAGAHFGHQAHRWNPKMQPYIFGTRNNIHIIDLAQTVPAMHQALQAVSDTVAKGGRVLFVGTKRQAADTIAEAAKRSAQYYVNSRWLGGMLTNWKTISGSISRLRKVTETLETGGPGLTKKERLMLSREKEKLEKALGGIKDMGGVPDLLFVIDTNKEQLAIKEANRLGIPVAAIVDTNCNPDGISYIVPANDDAGRAIALYCDLIAKAAIDGISRAQGSSGMDLGASEEPMAEELPANDDAAVTVESDALDPADVAMLAESTEHFELLAAPRGAPDDLTKLNGAGPQIVQKLNDAGIYHYWQLAAMTPEDVAKVDADLKLNGRIDRDSWVSQARGFVEAAAAA</sequence>